<sequence length="532" mass="60141">MEGDSYHNATTVNGTPVYHQPLERHRLWEVISIAAVTAVVSLITIVGNVLVMISFKVNSQLKTVNNYYLLSLACADLIIGIFSMNLYTTYILMGRWALGSLACDLWLALDYVASNASVMNLLVISFDRYFSITRPLTYRAKRTPKRAGVMIGLAWLISFILWAPAILCWQYLVGKRTVPLDECQIQFLSEPTITFGTAIAAFYIPVSVMTILYCRIYRETEKRTKDLADLQGSDSVTEAEKRKPAHRALFRSCLRCPRPTLAQRERNQTSWSSSRRSASTSGKPSQATDPSTNQAKAEQLTTCSSYPSSEDEDKPATDPVLQVVYKSRGKESPGEEFSSEDAEETFVKAQTEKHDSDTPNYFLSPAAAHRPKSQKCVAYKFRLVVKADGTQENNNGCHKVKIMPCSFPVAKEPSTKGLNPNPSHQMTKRKRMVLVKERKAAQTLSAILLAFIITWTPYNIMVLVSTFCDKCVPVTLWHLGYWLCYVNSTVNPICYALCNRTFRKTFKMLLLCRWKKKKVEEKLYWQGNSKLP</sequence>
<evidence type="ECO:0000250" key="1"/>
<evidence type="ECO:0000255" key="2"/>
<evidence type="ECO:0000255" key="3">
    <source>
        <dbReference type="PROSITE-ProRule" id="PRU00521"/>
    </source>
</evidence>
<evidence type="ECO:0000256" key="4">
    <source>
        <dbReference type="SAM" id="MobiDB-lite"/>
    </source>
</evidence>
<name>ACM5_MACMU</name>
<dbReference type="EMBL" id="AF026264">
    <property type="protein sequence ID" value="AAB95159.1"/>
    <property type="molecule type" value="mRNA"/>
</dbReference>
<dbReference type="RefSeq" id="NP_001028103.1">
    <property type="nucleotide sequence ID" value="NM_001032931.1"/>
</dbReference>
<dbReference type="SMR" id="P56490"/>
<dbReference type="FunCoup" id="P56490">
    <property type="interactions" value="1084"/>
</dbReference>
<dbReference type="STRING" id="9544.ENSMMUP00000018686"/>
<dbReference type="GlyCosmos" id="P56490">
    <property type="glycosylation" value="1 site, No reported glycans"/>
</dbReference>
<dbReference type="PaxDb" id="9544-ENSMMUP00000018686"/>
<dbReference type="Ensembl" id="ENSMMUT00000019965.4">
    <property type="protein sequence ID" value="ENSMMUP00000018686.2"/>
    <property type="gene ID" value="ENSMMUG00000014227.4"/>
</dbReference>
<dbReference type="GeneID" id="574330"/>
<dbReference type="KEGG" id="mcc:574330"/>
<dbReference type="CTD" id="1133"/>
<dbReference type="VEuPathDB" id="HostDB:ENSMMUG00000014227"/>
<dbReference type="VGNC" id="VGNC:71044">
    <property type="gene designation" value="CHRM5"/>
</dbReference>
<dbReference type="eggNOG" id="KOG4220">
    <property type="taxonomic scope" value="Eukaryota"/>
</dbReference>
<dbReference type="GeneTree" id="ENSGT00940000158450"/>
<dbReference type="HOGENOM" id="CLU_009579_11_2_1"/>
<dbReference type="InParanoid" id="P56490"/>
<dbReference type="OMA" id="IPVTLWH"/>
<dbReference type="OrthoDB" id="10071887at2759"/>
<dbReference type="TreeFam" id="TF320495"/>
<dbReference type="Proteomes" id="UP000006718">
    <property type="component" value="Chromosome 7"/>
</dbReference>
<dbReference type="Bgee" id="ENSMMUG00000014227">
    <property type="expression patterns" value="Expressed in spermatid and 4 other cell types or tissues"/>
</dbReference>
<dbReference type="ExpressionAtlas" id="P56490">
    <property type="expression patterns" value="baseline"/>
</dbReference>
<dbReference type="GO" id="GO:0030425">
    <property type="term" value="C:dendrite"/>
    <property type="evidence" value="ECO:0000318"/>
    <property type="project" value="GO_Central"/>
</dbReference>
<dbReference type="GO" id="GO:0005886">
    <property type="term" value="C:plasma membrane"/>
    <property type="evidence" value="ECO:0000318"/>
    <property type="project" value="GO_Central"/>
</dbReference>
<dbReference type="GO" id="GO:0045211">
    <property type="term" value="C:postsynaptic membrane"/>
    <property type="evidence" value="ECO:0007669"/>
    <property type="project" value="UniProtKB-SubCell"/>
</dbReference>
<dbReference type="GO" id="GO:0045202">
    <property type="term" value="C:synapse"/>
    <property type="evidence" value="ECO:0000318"/>
    <property type="project" value="GO_Central"/>
</dbReference>
<dbReference type="GO" id="GO:0016907">
    <property type="term" value="F:G protein-coupled acetylcholine receptor activity"/>
    <property type="evidence" value="ECO:0000318"/>
    <property type="project" value="GO_Central"/>
</dbReference>
<dbReference type="GO" id="GO:0007197">
    <property type="term" value="P:adenylate cyclase-inhibiting G protein-coupled acetylcholine receptor signaling pathway"/>
    <property type="evidence" value="ECO:0000318"/>
    <property type="project" value="GO_Central"/>
</dbReference>
<dbReference type="GO" id="GO:0007268">
    <property type="term" value="P:chemical synaptic transmission"/>
    <property type="evidence" value="ECO:0000318"/>
    <property type="project" value="GO_Central"/>
</dbReference>
<dbReference type="GO" id="GO:0015872">
    <property type="term" value="P:dopamine transport"/>
    <property type="evidence" value="ECO:0007669"/>
    <property type="project" value="Ensembl"/>
</dbReference>
<dbReference type="GO" id="GO:0007187">
    <property type="term" value="P:G protein-coupled receptor signaling pathway, coupled to cyclic nucleotide second messenger"/>
    <property type="evidence" value="ECO:0000318"/>
    <property type="project" value="GO_Central"/>
</dbReference>
<dbReference type="GO" id="GO:0001696">
    <property type="term" value="P:gastric acid secretion"/>
    <property type="evidence" value="ECO:0007669"/>
    <property type="project" value="InterPro"/>
</dbReference>
<dbReference type="GO" id="GO:0019226">
    <property type="term" value="P:transmission of nerve impulse"/>
    <property type="evidence" value="ECO:0007669"/>
    <property type="project" value="Ensembl"/>
</dbReference>
<dbReference type="CDD" id="cd15300">
    <property type="entry name" value="7tmA_mAChR_M5"/>
    <property type="match status" value="1"/>
</dbReference>
<dbReference type="FunFam" id="1.20.1070.10:FF:000047">
    <property type="entry name" value="Muscarinic acetylcholine receptor"/>
    <property type="match status" value="1"/>
</dbReference>
<dbReference type="FunFam" id="1.20.1070.10:FF:000164">
    <property type="entry name" value="Muscarinic acetylcholine receptor"/>
    <property type="match status" value="1"/>
</dbReference>
<dbReference type="Gene3D" id="1.20.1070.10">
    <property type="entry name" value="Rhodopsin 7-helix transmembrane proteins"/>
    <property type="match status" value="2"/>
</dbReference>
<dbReference type="InterPro" id="IPR000276">
    <property type="entry name" value="GPCR_Rhodpsn"/>
</dbReference>
<dbReference type="InterPro" id="IPR017452">
    <property type="entry name" value="GPCR_Rhodpsn_7TM"/>
</dbReference>
<dbReference type="InterPro" id="IPR000502">
    <property type="entry name" value="Musac_Ach_M5_rcpt"/>
</dbReference>
<dbReference type="InterPro" id="IPR000995">
    <property type="entry name" value="Musac_Ach_rcpt"/>
</dbReference>
<dbReference type="PANTHER" id="PTHR24247">
    <property type="entry name" value="5-HYDROXYTRYPTAMINE RECEPTOR"/>
    <property type="match status" value="1"/>
</dbReference>
<dbReference type="PANTHER" id="PTHR24247:SF209">
    <property type="entry name" value="MUSCARINIC ACETYLCHOLINE RECEPTOR M5"/>
    <property type="match status" value="1"/>
</dbReference>
<dbReference type="Pfam" id="PF00001">
    <property type="entry name" value="7tm_1"/>
    <property type="match status" value="1"/>
</dbReference>
<dbReference type="PRINTS" id="PR00237">
    <property type="entry name" value="GPCRRHODOPSN"/>
</dbReference>
<dbReference type="PRINTS" id="PR00243">
    <property type="entry name" value="MUSCARINICR"/>
</dbReference>
<dbReference type="PRINTS" id="PR00542">
    <property type="entry name" value="MUSCRINICM5R"/>
</dbReference>
<dbReference type="SUPFAM" id="SSF81321">
    <property type="entry name" value="Family A G protein-coupled receptor-like"/>
    <property type="match status" value="1"/>
</dbReference>
<dbReference type="PROSITE" id="PS00237">
    <property type="entry name" value="G_PROTEIN_RECEP_F1_1"/>
    <property type="match status" value="1"/>
</dbReference>
<dbReference type="PROSITE" id="PS50262">
    <property type="entry name" value="G_PROTEIN_RECEP_F1_2"/>
    <property type="match status" value="1"/>
</dbReference>
<reference key="1">
    <citation type="submission" date="1997-09" db="EMBL/GenBank/DDBJ databases">
        <authorList>
            <person name="Rae J.L."/>
            <person name="Shepard A.R."/>
        </authorList>
    </citation>
    <scope>NUCLEOTIDE SEQUENCE [MRNA]</scope>
    <source>
        <tissue>Lens epithelium</tissue>
    </source>
</reference>
<accession>P56490</accession>
<proteinExistence type="evidence at transcript level"/>
<gene>
    <name type="primary">CHRM5</name>
</gene>
<keyword id="KW-1003">Cell membrane</keyword>
<keyword id="KW-1015">Disulfide bond</keyword>
<keyword id="KW-0297">G-protein coupled receptor</keyword>
<keyword id="KW-0325">Glycoprotein</keyword>
<keyword id="KW-0472">Membrane</keyword>
<keyword id="KW-0597">Phosphoprotein</keyword>
<keyword id="KW-0628">Postsynaptic cell membrane</keyword>
<keyword id="KW-0675">Receptor</keyword>
<keyword id="KW-1185">Reference proteome</keyword>
<keyword id="KW-0770">Synapse</keyword>
<keyword id="KW-0807">Transducer</keyword>
<keyword id="KW-0812">Transmembrane</keyword>
<keyword id="KW-1133">Transmembrane helix</keyword>
<protein>
    <recommendedName>
        <fullName>Muscarinic acetylcholine receptor M5</fullName>
    </recommendedName>
</protein>
<comment type="function">
    <text>The muscarinic acetylcholine receptor mediates various cellular responses, including inhibition of adenylate cyclase, breakdown of phosphoinositides and modulation of potassium channels through the action of G proteins. Primary transducing effect is Pi turnover.</text>
</comment>
<comment type="subcellular location">
    <subcellularLocation>
        <location>Cell membrane</location>
        <topology>Multi-pass membrane protein</topology>
    </subcellularLocation>
    <subcellularLocation>
        <location>Postsynaptic cell membrane</location>
        <topology>Multi-pass membrane protein</topology>
    </subcellularLocation>
</comment>
<comment type="similarity">
    <text evidence="3">Belongs to the G-protein coupled receptor 1 family. Muscarinic acetylcholine receptor subfamily. CHRM5 sub-subfamily.</text>
</comment>
<feature type="chain" id="PRO_0000069043" description="Muscarinic acetylcholine receptor M5">
    <location>
        <begin position="1"/>
        <end position="532"/>
    </location>
</feature>
<feature type="topological domain" description="Extracellular" evidence="1">
    <location>
        <begin position="1"/>
        <end position="29"/>
    </location>
</feature>
<feature type="transmembrane region" description="Helical; Name=1" evidence="1">
    <location>
        <begin position="30"/>
        <end position="53"/>
    </location>
</feature>
<feature type="topological domain" description="Cytoplasmic" evidence="1">
    <location>
        <begin position="54"/>
        <end position="66"/>
    </location>
</feature>
<feature type="transmembrane region" description="Helical; Name=2" evidence="1">
    <location>
        <begin position="67"/>
        <end position="87"/>
    </location>
</feature>
<feature type="topological domain" description="Extracellular" evidence="1">
    <location>
        <begin position="88"/>
        <end position="104"/>
    </location>
</feature>
<feature type="transmembrane region" description="Helical; Name=3" evidence="1">
    <location>
        <begin position="105"/>
        <end position="126"/>
    </location>
</feature>
<feature type="topological domain" description="Cytoplasmic" evidence="1">
    <location>
        <begin position="127"/>
        <end position="146"/>
    </location>
</feature>
<feature type="transmembrane region" description="Helical; Name=4" evidence="1">
    <location>
        <begin position="147"/>
        <end position="169"/>
    </location>
</feature>
<feature type="topological domain" description="Extracellular" evidence="1">
    <location>
        <begin position="170"/>
        <end position="191"/>
    </location>
</feature>
<feature type="transmembrane region" description="Helical; Name=5" evidence="1">
    <location>
        <begin position="192"/>
        <end position="214"/>
    </location>
</feature>
<feature type="topological domain" description="Cytoplasmic" evidence="1">
    <location>
        <begin position="215"/>
        <end position="443"/>
    </location>
</feature>
<feature type="transmembrane region" description="Helical; Name=6" evidence="1">
    <location>
        <begin position="444"/>
        <end position="464"/>
    </location>
</feature>
<feature type="topological domain" description="Extracellular" evidence="1">
    <location>
        <begin position="465"/>
        <end position="478"/>
    </location>
</feature>
<feature type="transmembrane region" description="Helical; Name=7" evidence="1">
    <location>
        <begin position="479"/>
        <end position="498"/>
    </location>
</feature>
<feature type="topological domain" description="Cytoplasmic" evidence="1">
    <location>
        <begin position="499"/>
        <end position="532"/>
    </location>
</feature>
<feature type="region of interest" description="Disordered" evidence="4">
    <location>
        <begin position="262"/>
        <end position="365"/>
    </location>
</feature>
<feature type="compositionally biased region" description="Low complexity" evidence="4">
    <location>
        <begin position="269"/>
        <end position="281"/>
    </location>
</feature>
<feature type="compositionally biased region" description="Polar residues" evidence="4">
    <location>
        <begin position="282"/>
        <end position="308"/>
    </location>
</feature>
<feature type="modified residue" description="Phosphothreonine" evidence="2">
    <location>
        <position position="501"/>
    </location>
</feature>
<feature type="modified residue" description="Phosphothreonine" evidence="2">
    <location>
        <position position="505"/>
    </location>
</feature>
<feature type="glycosylation site" description="N-linked (GlcNAc...) asparagine" evidence="2">
    <location>
        <position position="8"/>
    </location>
</feature>
<feature type="disulfide bond" evidence="3">
    <location>
        <begin position="103"/>
        <end position="183"/>
    </location>
</feature>
<organism>
    <name type="scientific">Macaca mulatta</name>
    <name type="common">Rhesus macaque</name>
    <dbReference type="NCBI Taxonomy" id="9544"/>
    <lineage>
        <taxon>Eukaryota</taxon>
        <taxon>Metazoa</taxon>
        <taxon>Chordata</taxon>
        <taxon>Craniata</taxon>
        <taxon>Vertebrata</taxon>
        <taxon>Euteleostomi</taxon>
        <taxon>Mammalia</taxon>
        <taxon>Eutheria</taxon>
        <taxon>Euarchontoglires</taxon>
        <taxon>Primates</taxon>
        <taxon>Haplorrhini</taxon>
        <taxon>Catarrhini</taxon>
        <taxon>Cercopithecidae</taxon>
        <taxon>Cercopithecinae</taxon>
        <taxon>Macaca</taxon>
    </lineage>
</organism>